<name>ACP_DESDA</name>
<comment type="function">
    <text evidence="1">Carrier of the growing fatty acid chain in fatty acid biosynthesis.</text>
</comment>
<comment type="pathway">
    <text evidence="1">Lipid metabolism; fatty acid biosynthesis.</text>
</comment>
<comment type="subcellular location">
    <subcellularLocation>
        <location evidence="1">Cytoplasm</location>
    </subcellularLocation>
</comment>
<comment type="PTM">
    <text evidence="1">4'-phosphopantetheine is transferred from CoA to a specific serine of apo-ACP by AcpS. This modification is essential for activity because fatty acids are bound in thioester linkage to the sulfhydryl of the prosthetic group.</text>
</comment>
<comment type="similarity">
    <text evidence="1">Belongs to the acyl carrier protein (ACP) family.</text>
</comment>
<accession>B8J187</accession>
<organism>
    <name type="scientific">Desulfovibrio desulfuricans (strain ATCC 27774 / DSM 6949 / MB)</name>
    <dbReference type="NCBI Taxonomy" id="525146"/>
    <lineage>
        <taxon>Bacteria</taxon>
        <taxon>Pseudomonadati</taxon>
        <taxon>Thermodesulfobacteriota</taxon>
        <taxon>Desulfovibrionia</taxon>
        <taxon>Desulfovibrionales</taxon>
        <taxon>Desulfovibrionaceae</taxon>
        <taxon>Desulfovibrio</taxon>
    </lineage>
</organism>
<sequence length="77" mass="8558">MSDVAEKVKKIIVDQLGVSADEVKPEASFVEDLGADSLDLTELIMAMEEEFEVEIADEDAQKILKVQDAIAYIEEKK</sequence>
<gene>
    <name evidence="1" type="primary">acpP</name>
    <name type="ordered locus">Ddes_1615</name>
</gene>
<evidence type="ECO:0000255" key="1">
    <source>
        <dbReference type="HAMAP-Rule" id="MF_01217"/>
    </source>
</evidence>
<evidence type="ECO:0000255" key="2">
    <source>
        <dbReference type="PROSITE-ProRule" id="PRU00258"/>
    </source>
</evidence>
<proteinExistence type="inferred from homology"/>
<dbReference type="EMBL" id="CP001358">
    <property type="protein sequence ID" value="ACL49514.1"/>
    <property type="molecule type" value="Genomic_DNA"/>
</dbReference>
<dbReference type="SMR" id="B8J187"/>
<dbReference type="STRING" id="525146.Ddes_1615"/>
<dbReference type="KEGG" id="dds:Ddes_1615"/>
<dbReference type="eggNOG" id="COG0236">
    <property type="taxonomic scope" value="Bacteria"/>
</dbReference>
<dbReference type="HOGENOM" id="CLU_108696_5_3_7"/>
<dbReference type="UniPathway" id="UPA00094"/>
<dbReference type="GO" id="GO:0005829">
    <property type="term" value="C:cytosol"/>
    <property type="evidence" value="ECO:0007669"/>
    <property type="project" value="TreeGrafter"/>
</dbReference>
<dbReference type="GO" id="GO:0016020">
    <property type="term" value="C:membrane"/>
    <property type="evidence" value="ECO:0007669"/>
    <property type="project" value="GOC"/>
</dbReference>
<dbReference type="GO" id="GO:0000035">
    <property type="term" value="F:acyl binding"/>
    <property type="evidence" value="ECO:0007669"/>
    <property type="project" value="TreeGrafter"/>
</dbReference>
<dbReference type="GO" id="GO:0000036">
    <property type="term" value="F:acyl carrier activity"/>
    <property type="evidence" value="ECO:0007669"/>
    <property type="project" value="UniProtKB-UniRule"/>
</dbReference>
<dbReference type="GO" id="GO:0009245">
    <property type="term" value="P:lipid A biosynthetic process"/>
    <property type="evidence" value="ECO:0007669"/>
    <property type="project" value="TreeGrafter"/>
</dbReference>
<dbReference type="FunFam" id="1.10.1200.10:FF:000001">
    <property type="entry name" value="Acyl carrier protein"/>
    <property type="match status" value="1"/>
</dbReference>
<dbReference type="Gene3D" id="1.10.1200.10">
    <property type="entry name" value="ACP-like"/>
    <property type="match status" value="1"/>
</dbReference>
<dbReference type="HAMAP" id="MF_01217">
    <property type="entry name" value="Acyl_carrier"/>
    <property type="match status" value="1"/>
</dbReference>
<dbReference type="InterPro" id="IPR003231">
    <property type="entry name" value="ACP"/>
</dbReference>
<dbReference type="InterPro" id="IPR036736">
    <property type="entry name" value="ACP-like_sf"/>
</dbReference>
<dbReference type="InterPro" id="IPR009081">
    <property type="entry name" value="PP-bd_ACP"/>
</dbReference>
<dbReference type="InterPro" id="IPR006162">
    <property type="entry name" value="Ppantetheine_attach_site"/>
</dbReference>
<dbReference type="NCBIfam" id="TIGR00517">
    <property type="entry name" value="acyl_carrier"/>
    <property type="match status" value="1"/>
</dbReference>
<dbReference type="NCBIfam" id="NF002148">
    <property type="entry name" value="PRK00982.1-2"/>
    <property type="match status" value="1"/>
</dbReference>
<dbReference type="NCBIfam" id="NF002149">
    <property type="entry name" value="PRK00982.1-3"/>
    <property type="match status" value="1"/>
</dbReference>
<dbReference type="NCBIfam" id="NF002150">
    <property type="entry name" value="PRK00982.1-4"/>
    <property type="match status" value="1"/>
</dbReference>
<dbReference type="NCBIfam" id="NF002151">
    <property type="entry name" value="PRK00982.1-5"/>
    <property type="match status" value="1"/>
</dbReference>
<dbReference type="PANTHER" id="PTHR20863">
    <property type="entry name" value="ACYL CARRIER PROTEIN"/>
    <property type="match status" value="1"/>
</dbReference>
<dbReference type="PANTHER" id="PTHR20863:SF76">
    <property type="entry name" value="CARRIER DOMAIN-CONTAINING PROTEIN"/>
    <property type="match status" value="1"/>
</dbReference>
<dbReference type="Pfam" id="PF00550">
    <property type="entry name" value="PP-binding"/>
    <property type="match status" value="1"/>
</dbReference>
<dbReference type="SUPFAM" id="SSF47336">
    <property type="entry name" value="ACP-like"/>
    <property type="match status" value="1"/>
</dbReference>
<dbReference type="PROSITE" id="PS50075">
    <property type="entry name" value="CARRIER"/>
    <property type="match status" value="1"/>
</dbReference>
<dbReference type="PROSITE" id="PS00012">
    <property type="entry name" value="PHOSPHOPANTETHEINE"/>
    <property type="match status" value="1"/>
</dbReference>
<keyword id="KW-0963">Cytoplasm</keyword>
<keyword id="KW-0275">Fatty acid biosynthesis</keyword>
<keyword id="KW-0276">Fatty acid metabolism</keyword>
<keyword id="KW-0444">Lipid biosynthesis</keyword>
<keyword id="KW-0443">Lipid metabolism</keyword>
<keyword id="KW-0596">Phosphopantetheine</keyword>
<keyword id="KW-0597">Phosphoprotein</keyword>
<protein>
    <recommendedName>
        <fullName evidence="1">Acyl carrier protein</fullName>
        <shortName evidence="1">ACP</shortName>
    </recommendedName>
</protein>
<reference key="1">
    <citation type="submission" date="2009-01" db="EMBL/GenBank/DDBJ databases">
        <title>Complete sequence of Desulfovibrio desulfuricans subsp. desulfuricans str. ATCC 27774.</title>
        <authorList>
            <consortium name="US DOE Joint Genome Institute"/>
            <person name="Lucas S."/>
            <person name="Copeland A."/>
            <person name="Lapidus A."/>
            <person name="Glavina del Rio T."/>
            <person name="Tice H."/>
            <person name="Bruce D."/>
            <person name="Goodwin L."/>
            <person name="Pitluck S."/>
            <person name="Sims D."/>
            <person name="Lu M."/>
            <person name="Kiss H."/>
            <person name="Meineke L."/>
            <person name="Brettin T."/>
            <person name="Detter J.C."/>
            <person name="Han C."/>
            <person name="Larimer F."/>
            <person name="Land M."/>
            <person name="Hauser L."/>
            <person name="Kyrpides N."/>
            <person name="Ovchinnikova G."/>
            <person name="Hazen T.C."/>
        </authorList>
    </citation>
    <scope>NUCLEOTIDE SEQUENCE [LARGE SCALE GENOMIC DNA]</scope>
    <source>
        <strain>ATCC 27774 / DSM 6949 / MB</strain>
    </source>
</reference>
<feature type="chain" id="PRO_1000213905" description="Acyl carrier protein">
    <location>
        <begin position="1"/>
        <end position="77"/>
    </location>
</feature>
<feature type="domain" description="Carrier" evidence="2">
    <location>
        <begin position="2"/>
        <end position="77"/>
    </location>
</feature>
<feature type="modified residue" description="O-(pantetheine 4'-phosphoryl)serine" evidence="2">
    <location>
        <position position="37"/>
    </location>
</feature>